<dbReference type="EC" id="3.1.11.6" evidence="1"/>
<dbReference type="EMBL" id="CP001215">
    <property type="protein sequence ID" value="ACP14254.1"/>
    <property type="molecule type" value="Genomic_DNA"/>
</dbReference>
<dbReference type="RefSeq" id="WP_000415259.1">
    <property type="nucleotide sequence ID" value="NC_012581.1"/>
</dbReference>
<dbReference type="SMR" id="C3LJV4"/>
<dbReference type="GeneID" id="45024063"/>
<dbReference type="KEGG" id="bah:BAMEG_4439"/>
<dbReference type="HOGENOM" id="CLU_023625_3_1_9"/>
<dbReference type="GO" id="GO:0005737">
    <property type="term" value="C:cytoplasm"/>
    <property type="evidence" value="ECO:0007669"/>
    <property type="project" value="UniProtKB-SubCell"/>
</dbReference>
<dbReference type="GO" id="GO:0009318">
    <property type="term" value="C:exodeoxyribonuclease VII complex"/>
    <property type="evidence" value="ECO:0007669"/>
    <property type="project" value="InterPro"/>
</dbReference>
<dbReference type="GO" id="GO:0008855">
    <property type="term" value="F:exodeoxyribonuclease VII activity"/>
    <property type="evidence" value="ECO:0007669"/>
    <property type="project" value="UniProtKB-UniRule"/>
</dbReference>
<dbReference type="GO" id="GO:0003676">
    <property type="term" value="F:nucleic acid binding"/>
    <property type="evidence" value="ECO:0007669"/>
    <property type="project" value="InterPro"/>
</dbReference>
<dbReference type="GO" id="GO:0006308">
    <property type="term" value="P:DNA catabolic process"/>
    <property type="evidence" value="ECO:0007669"/>
    <property type="project" value="UniProtKB-UniRule"/>
</dbReference>
<dbReference type="CDD" id="cd04489">
    <property type="entry name" value="ExoVII_LU_OBF"/>
    <property type="match status" value="1"/>
</dbReference>
<dbReference type="HAMAP" id="MF_00378">
    <property type="entry name" value="Exonuc_7_L"/>
    <property type="match status" value="1"/>
</dbReference>
<dbReference type="InterPro" id="IPR003753">
    <property type="entry name" value="Exonuc_VII_L"/>
</dbReference>
<dbReference type="InterPro" id="IPR020579">
    <property type="entry name" value="Exonuc_VII_lsu_C"/>
</dbReference>
<dbReference type="InterPro" id="IPR025824">
    <property type="entry name" value="OB-fold_nuc-bd_dom"/>
</dbReference>
<dbReference type="NCBIfam" id="TIGR00237">
    <property type="entry name" value="xseA"/>
    <property type="match status" value="1"/>
</dbReference>
<dbReference type="PANTHER" id="PTHR30008">
    <property type="entry name" value="EXODEOXYRIBONUCLEASE 7 LARGE SUBUNIT"/>
    <property type="match status" value="1"/>
</dbReference>
<dbReference type="PANTHER" id="PTHR30008:SF0">
    <property type="entry name" value="EXODEOXYRIBONUCLEASE 7 LARGE SUBUNIT"/>
    <property type="match status" value="1"/>
</dbReference>
<dbReference type="Pfam" id="PF02601">
    <property type="entry name" value="Exonuc_VII_L"/>
    <property type="match status" value="1"/>
</dbReference>
<dbReference type="Pfam" id="PF13742">
    <property type="entry name" value="tRNA_anti_2"/>
    <property type="match status" value="1"/>
</dbReference>
<accession>C3LJV4</accession>
<sequence>MEKQYLTVTALTRYIKTKIEYDPHLQSVWLKGEISNFKNHSRGHMYFTLKDENARIAAVMFAGHNRNIKFRPENGMKVLVKGKISVYEASGSYQIYIQDMQPDGIGNLHLAYEQLKVRLEEEGLFSQVYKKTIPPYAKTIGVITSPTGAAIRDIITTIKRRYPIGNVIVFPVLVQGESAAPSIVQAIRTANEMEEIDVLIVGRGGGSIEELWAFNEEMVARAIFKSEIPIISAVGHETDFTIADFVADLRAPTPTAAAELAAPNIIELQEKVLQRTLRLQRAMRELVHKKEEKLQVLQKSYAFRYPRQVYEQKEEQLDRALEQLVLAKERYIDKKVNQLKQLSFYLEKHHPSQKIMQTKVAVETLQKQLQREMQTLLQAKEFAFVRAAQKLEALSPLKVMMRGYGLVYDEEKQVLKSVKDVSLGDAVSVQLQDGILDCSVSGIEERELNNGK</sequence>
<proteinExistence type="inferred from homology"/>
<protein>
    <recommendedName>
        <fullName evidence="1">Exodeoxyribonuclease 7 large subunit</fullName>
        <ecNumber evidence="1">3.1.11.6</ecNumber>
    </recommendedName>
    <alternativeName>
        <fullName evidence="1">Exodeoxyribonuclease VII large subunit</fullName>
        <shortName evidence="1">Exonuclease VII large subunit</shortName>
    </alternativeName>
</protein>
<feature type="chain" id="PRO_1000200658" description="Exodeoxyribonuclease 7 large subunit">
    <location>
        <begin position="1"/>
        <end position="452"/>
    </location>
</feature>
<name>EX7L_BACAC</name>
<gene>
    <name evidence="1" type="primary">xseA</name>
    <name type="ordered locus">BAMEG_4439</name>
</gene>
<evidence type="ECO:0000255" key="1">
    <source>
        <dbReference type="HAMAP-Rule" id="MF_00378"/>
    </source>
</evidence>
<comment type="function">
    <text evidence="1">Bidirectionally degrades single-stranded DNA into large acid-insoluble oligonucleotides, which are then degraded further into small acid-soluble oligonucleotides.</text>
</comment>
<comment type="catalytic activity">
    <reaction evidence="1">
        <text>Exonucleolytic cleavage in either 5'- to 3'- or 3'- to 5'-direction to yield nucleoside 5'-phosphates.</text>
        <dbReference type="EC" id="3.1.11.6"/>
    </reaction>
</comment>
<comment type="subunit">
    <text evidence="1">Heterooligomer composed of large and small subunits.</text>
</comment>
<comment type="subcellular location">
    <subcellularLocation>
        <location evidence="1">Cytoplasm</location>
    </subcellularLocation>
</comment>
<comment type="similarity">
    <text evidence="1">Belongs to the XseA family.</text>
</comment>
<organism>
    <name type="scientific">Bacillus anthracis (strain CDC 684 / NRRL 3495)</name>
    <dbReference type="NCBI Taxonomy" id="568206"/>
    <lineage>
        <taxon>Bacteria</taxon>
        <taxon>Bacillati</taxon>
        <taxon>Bacillota</taxon>
        <taxon>Bacilli</taxon>
        <taxon>Bacillales</taxon>
        <taxon>Bacillaceae</taxon>
        <taxon>Bacillus</taxon>
        <taxon>Bacillus cereus group</taxon>
    </lineage>
</organism>
<keyword id="KW-0963">Cytoplasm</keyword>
<keyword id="KW-0269">Exonuclease</keyword>
<keyword id="KW-0378">Hydrolase</keyword>
<keyword id="KW-0540">Nuclease</keyword>
<reference key="1">
    <citation type="submission" date="2008-10" db="EMBL/GenBank/DDBJ databases">
        <title>Genome sequence of Bacillus anthracis str. CDC 684.</title>
        <authorList>
            <person name="Dodson R.J."/>
            <person name="Munk A.C."/>
            <person name="Brettin T."/>
            <person name="Bruce D."/>
            <person name="Detter C."/>
            <person name="Tapia R."/>
            <person name="Han C."/>
            <person name="Sutton G."/>
            <person name="Sims D."/>
        </authorList>
    </citation>
    <scope>NUCLEOTIDE SEQUENCE [LARGE SCALE GENOMIC DNA]</scope>
    <source>
        <strain>CDC 684 / NRRL 3495</strain>
    </source>
</reference>